<evidence type="ECO:0000250" key="1"/>
<evidence type="ECO:0000255" key="2">
    <source>
        <dbReference type="HAMAP-Rule" id="MF_00100"/>
    </source>
</evidence>
<evidence type="ECO:0000256" key="3">
    <source>
        <dbReference type="SAM" id="MobiDB-lite"/>
    </source>
</evidence>
<organism>
    <name type="scientific">Aliivibrio salmonicida (strain LFI1238)</name>
    <name type="common">Vibrio salmonicida (strain LFI1238)</name>
    <dbReference type="NCBI Taxonomy" id="316275"/>
    <lineage>
        <taxon>Bacteria</taxon>
        <taxon>Pseudomonadati</taxon>
        <taxon>Pseudomonadota</taxon>
        <taxon>Gammaproteobacteria</taxon>
        <taxon>Vibrionales</taxon>
        <taxon>Vibrionaceae</taxon>
        <taxon>Aliivibrio</taxon>
    </lineage>
</organism>
<accession>B6ENE2</accession>
<sequence length="891" mass="97549">MTKLTVKALSEDIGTPVDRLLQQFSDAGINKKDGDSVSEGEKQSLLIHLKKEHGSADESASPTRLTLQRKTRSTLSVAGSGGKSKDVQVEVRKKRTYVKASTLEEEKKTEQMKVEAGDKAKRDAEEAAVRELEQKAKREAEEKAKREAEAEVKVKRDAEQTAKRTKTEKAKKEMTTKNDQAKTEADELKLRQETEATRKAEAEAAKLVEDARKLAEENEGRWKEEEQKKTAAEKTADYHVTTSTHAREAEDAADRKDEQQPRRRKKKAKAAPVERGGRNQRGGRNRKPQVNKPTSMQHGFDKSATVAKQDVAIGETIIVSELANKMSVKATEVIKVMMKMGAMATINQVIDQETAALVAEEMGHKVVLRKENELEEAVLSDRDNSATVEGRAPVVTIMGHVDHGKTSTLDYIRRAHVADAEAGGITQHIGAYHVETDNGMITFLDTPGHAAFTAMRARGAQATDIVVLVVAADDGVMPQTIEAIQHAKAAGVPLIVAVNKIDKEGANPDNVKNELAQYDIIPEEWGGENMFVHISAKQGTNIEGLLEAILLQSEVLELTAVKEGMASGVVVESRLDKGRGPVATVLVQSGTLHKGDIVLCGQEYGRVRAMRDENGKDIDSAGPSIPVEILGLSGVPASGDEATVVRDERKAREVANYRQGKFRDVKLARQQKAKLENMFANMEAGEVAECNVVLKADVQGSVEAIADSLRKLSTDEVKVNIVGSGVGGITETDATLAAASNAILLGFNVRADTSARRTIENENLDLRYYSIIYQLIDEVKQAMGGMLAPEFRQEIIGLAQVREVFKSPKIGAVAGCMVTEGTIKRNNPIRVLRDNIVIYEGELESLRRFKDDMPEVKNGYECGIGVKNYNDVRVGDQIEVFEIVEIQRTLD</sequence>
<gene>
    <name evidence="2" type="primary">infB</name>
    <name type="ordered locus">VSAL_I0598</name>
</gene>
<protein>
    <recommendedName>
        <fullName evidence="2">Translation initiation factor IF-2</fullName>
    </recommendedName>
</protein>
<proteinExistence type="inferred from homology"/>
<comment type="function">
    <text evidence="2">One of the essential components for the initiation of protein synthesis. Protects formylmethionyl-tRNA from spontaneous hydrolysis and promotes its binding to the 30S ribosomal subunits. Also involved in the hydrolysis of GTP during the formation of the 70S ribosomal complex.</text>
</comment>
<comment type="subcellular location">
    <subcellularLocation>
        <location evidence="2">Cytoplasm</location>
    </subcellularLocation>
</comment>
<comment type="similarity">
    <text evidence="2">Belongs to the TRAFAC class translation factor GTPase superfamily. Classic translation factor GTPase family. IF-2 subfamily.</text>
</comment>
<name>IF2_ALISL</name>
<keyword id="KW-0963">Cytoplasm</keyword>
<keyword id="KW-0342">GTP-binding</keyword>
<keyword id="KW-0396">Initiation factor</keyword>
<keyword id="KW-0547">Nucleotide-binding</keyword>
<keyword id="KW-0648">Protein biosynthesis</keyword>
<reference key="1">
    <citation type="journal article" date="2008" name="BMC Genomics">
        <title>The genome sequence of the fish pathogen Aliivibrio salmonicida strain LFI1238 shows extensive evidence of gene decay.</title>
        <authorList>
            <person name="Hjerde E."/>
            <person name="Lorentzen M.S."/>
            <person name="Holden M.T."/>
            <person name="Seeger K."/>
            <person name="Paulsen S."/>
            <person name="Bason N."/>
            <person name="Churcher C."/>
            <person name="Harris D."/>
            <person name="Norbertczak H."/>
            <person name="Quail M.A."/>
            <person name="Sanders S."/>
            <person name="Thurston S."/>
            <person name="Parkhill J."/>
            <person name="Willassen N.P."/>
            <person name="Thomson N.R."/>
        </authorList>
    </citation>
    <scope>NUCLEOTIDE SEQUENCE [LARGE SCALE GENOMIC DNA]</scope>
    <source>
        <strain>LFI1238</strain>
    </source>
</reference>
<feature type="chain" id="PRO_1000093754" description="Translation initiation factor IF-2">
    <location>
        <begin position="1"/>
        <end position="891"/>
    </location>
</feature>
<feature type="domain" description="tr-type G">
    <location>
        <begin position="390"/>
        <end position="559"/>
    </location>
</feature>
<feature type="region of interest" description="Disordered" evidence="3">
    <location>
        <begin position="50"/>
        <end position="303"/>
    </location>
</feature>
<feature type="region of interest" description="G1" evidence="1">
    <location>
        <begin position="399"/>
        <end position="406"/>
    </location>
</feature>
<feature type="region of interest" description="G2" evidence="1">
    <location>
        <begin position="424"/>
        <end position="428"/>
    </location>
</feature>
<feature type="region of interest" description="G3" evidence="1">
    <location>
        <begin position="445"/>
        <end position="448"/>
    </location>
</feature>
<feature type="region of interest" description="G4" evidence="1">
    <location>
        <begin position="499"/>
        <end position="502"/>
    </location>
</feature>
<feature type="region of interest" description="G5" evidence="1">
    <location>
        <begin position="535"/>
        <end position="537"/>
    </location>
</feature>
<feature type="compositionally biased region" description="Basic and acidic residues" evidence="3">
    <location>
        <begin position="102"/>
        <end position="237"/>
    </location>
</feature>
<feature type="compositionally biased region" description="Basic and acidic residues" evidence="3">
    <location>
        <begin position="245"/>
        <end position="261"/>
    </location>
</feature>
<feature type="binding site" evidence="2">
    <location>
        <begin position="399"/>
        <end position="406"/>
    </location>
    <ligand>
        <name>GTP</name>
        <dbReference type="ChEBI" id="CHEBI:37565"/>
    </ligand>
</feature>
<feature type="binding site" evidence="2">
    <location>
        <begin position="445"/>
        <end position="449"/>
    </location>
    <ligand>
        <name>GTP</name>
        <dbReference type="ChEBI" id="CHEBI:37565"/>
    </ligand>
</feature>
<feature type="binding site" evidence="2">
    <location>
        <begin position="499"/>
        <end position="502"/>
    </location>
    <ligand>
        <name>GTP</name>
        <dbReference type="ChEBI" id="CHEBI:37565"/>
    </ligand>
</feature>
<dbReference type="EMBL" id="FM178379">
    <property type="protein sequence ID" value="CAQ78283.1"/>
    <property type="molecule type" value="Genomic_DNA"/>
</dbReference>
<dbReference type="RefSeq" id="WP_012549406.1">
    <property type="nucleotide sequence ID" value="NC_011312.1"/>
</dbReference>
<dbReference type="SMR" id="B6ENE2"/>
<dbReference type="KEGG" id="vsa:VSAL_I0598"/>
<dbReference type="eggNOG" id="COG0532">
    <property type="taxonomic scope" value="Bacteria"/>
</dbReference>
<dbReference type="HOGENOM" id="CLU_006301_6_3_6"/>
<dbReference type="Proteomes" id="UP000001730">
    <property type="component" value="Chromosome 1"/>
</dbReference>
<dbReference type="GO" id="GO:0005829">
    <property type="term" value="C:cytosol"/>
    <property type="evidence" value="ECO:0007669"/>
    <property type="project" value="TreeGrafter"/>
</dbReference>
<dbReference type="GO" id="GO:0005525">
    <property type="term" value="F:GTP binding"/>
    <property type="evidence" value="ECO:0007669"/>
    <property type="project" value="UniProtKB-KW"/>
</dbReference>
<dbReference type="GO" id="GO:0003924">
    <property type="term" value="F:GTPase activity"/>
    <property type="evidence" value="ECO:0007669"/>
    <property type="project" value="UniProtKB-UniRule"/>
</dbReference>
<dbReference type="GO" id="GO:0097216">
    <property type="term" value="F:guanosine tetraphosphate binding"/>
    <property type="evidence" value="ECO:0007669"/>
    <property type="project" value="UniProtKB-ARBA"/>
</dbReference>
<dbReference type="GO" id="GO:0003743">
    <property type="term" value="F:translation initiation factor activity"/>
    <property type="evidence" value="ECO:0007669"/>
    <property type="project" value="UniProtKB-UniRule"/>
</dbReference>
<dbReference type="CDD" id="cd01887">
    <property type="entry name" value="IF2_eIF5B"/>
    <property type="match status" value="1"/>
</dbReference>
<dbReference type="CDD" id="cd03702">
    <property type="entry name" value="IF2_mtIF2_II"/>
    <property type="match status" value="1"/>
</dbReference>
<dbReference type="CDD" id="cd03692">
    <property type="entry name" value="mtIF2_IVc"/>
    <property type="match status" value="1"/>
</dbReference>
<dbReference type="FunFam" id="2.40.30.10:FF:000007">
    <property type="entry name" value="Translation initiation factor IF-2"/>
    <property type="match status" value="1"/>
</dbReference>
<dbReference type="FunFam" id="2.40.30.10:FF:000008">
    <property type="entry name" value="Translation initiation factor IF-2"/>
    <property type="match status" value="1"/>
</dbReference>
<dbReference type="FunFam" id="3.40.50.10050:FF:000001">
    <property type="entry name" value="Translation initiation factor IF-2"/>
    <property type="match status" value="1"/>
</dbReference>
<dbReference type="FunFam" id="3.40.50.300:FF:000019">
    <property type="entry name" value="Translation initiation factor IF-2"/>
    <property type="match status" value="1"/>
</dbReference>
<dbReference type="Gene3D" id="3.40.50.300">
    <property type="entry name" value="P-loop containing nucleotide triphosphate hydrolases"/>
    <property type="match status" value="1"/>
</dbReference>
<dbReference type="Gene3D" id="3.30.56.50">
    <property type="entry name" value="Putative DNA-binding domain, N-terminal subdomain of bacterial translation initiation factor IF2"/>
    <property type="match status" value="1"/>
</dbReference>
<dbReference type="Gene3D" id="2.40.30.10">
    <property type="entry name" value="Translation factors"/>
    <property type="match status" value="2"/>
</dbReference>
<dbReference type="Gene3D" id="3.40.50.10050">
    <property type="entry name" value="Translation initiation factor IF- 2, domain 3"/>
    <property type="match status" value="1"/>
</dbReference>
<dbReference type="HAMAP" id="MF_00100_B">
    <property type="entry name" value="IF_2_B"/>
    <property type="match status" value="1"/>
</dbReference>
<dbReference type="InterPro" id="IPR009061">
    <property type="entry name" value="DNA-bd_dom_put_sf"/>
</dbReference>
<dbReference type="InterPro" id="IPR053905">
    <property type="entry name" value="EF-G-like_DII"/>
</dbReference>
<dbReference type="InterPro" id="IPR004161">
    <property type="entry name" value="EFTu-like_2"/>
</dbReference>
<dbReference type="InterPro" id="IPR013575">
    <property type="entry name" value="IF2_assoc_dom_bac"/>
</dbReference>
<dbReference type="InterPro" id="IPR044145">
    <property type="entry name" value="IF2_II"/>
</dbReference>
<dbReference type="InterPro" id="IPR006847">
    <property type="entry name" value="IF2_N"/>
</dbReference>
<dbReference type="InterPro" id="IPR027417">
    <property type="entry name" value="P-loop_NTPase"/>
</dbReference>
<dbReference type="InterPro" id="IPR005225">
    <property type="entry name" value="Small_GTP-bd"/>
</dbReference>
<dbReference type="InterPro" id="IPR000795">
    <property type="entry name" value="T_Tr_GTP-bd_dom"/>
</dbReference>
<dbReference type="InterPro" id="IPR000178">
    <property type="entry name" value="TF_IF2_bacterial-like"/>
</dbReference>
<dbReference type="InterPro" id="IPR015760">
    <property type="entry name" value="TIF_IF2"/>
</dbReference>
<dbReference type="InterPro" id="IPR023115">
    <property type="entry name" value="TIF_IF2_dom3"/>
</dbReference>
<dbReference type="InterPro" id="IPR036925">
    <property type="entry name" value="TIF_IF2_dom3_sf"/>
</dbReference>
<dbReference type="InterPro" id="IPR009000">
    <property type="entry name" value="Transl_B-barrel_sf"/>
</dbReference>
<dbReference type="NCBIfam" id="TIGR00487">
    <property type="entry name" value="IF-2"/>
    <property type="match status" value="1"/>
</dbReference>
<dbReference type="NCBIfam" id="TIGR00231">
    <property type="entry name" value="small_GTP"/>
    <property type="match status" value="1"/>
</dbReference>
<dbReference type="PANTHER" id="PTHR43381:SF5">
    <property type="entry name" value="TR-TYPE G DOMAIN-CONTAINING PROTEIN"/>
    <property type="match status" value="1"/>
</dbReference>
<dbReference type="PANTHER" id="PTHR43381">
    <property type="entry name" value="TRANSLATION INITIATION FACTOR IF-2-RELATED"/>
    <property type="match status" value="1"/>
</dbReference>
<dbReference type="Pfam" id="PF22042">
    <property type="entry name" value="EF-G_D2"/>
    <property type="match status" value="1"/>
</dbReference>
<dbReference type="Pfam" id="PF00009">
    <property type="entry name" value="GTP_EFTU"/>
    <property type="match status" value="1"/>
</dbReference>
<dbReference type="Pfam" id="PF03144">
    <property type="entry name" value="GTP_EFTU_D2"/>
    <property type="match status" value="1"/>
</dbReference>
<dbReference type="Pfam" id="PF11987">
    <property type="entry name" value="IF-2"/>
    <property type="match status" value="1"/>
</dbReference>
<dbReference type="Pfam" id="PF08364">
    <property type="entry name" value="IF2_assoc"/>
    <property type="match status" value="1"/>
</dbReference>
<dbReference type="Pfam" id="PF04760">
    <property type="entry name" value="IF2_N"/>
    <property type="match status" value="2"/>
</dbReference>
<dbReference type="SUPFAM" id="SSF52156">
    <property type="entry name" value="Initiation factor IF2/eIF5b, domain 3"/>
    <property type="match status" value="1"/>
</dbReference>
<dbReference type="SUPFAM" id="SSF52540">
    <property type="entry name" value="P-loop containing nucleoside triphosphate hydrolases"/>
    <property type="match status" value="1"/>
</dbReference>
<dbReference type="SUPFAM" id="SSF46955">
    <property type="entry name" value="Putative DNA-binding domain"/>
    <property type="match status" value="1"/>
</dbReference>
<dbReference type="SUPFAM" id="SSF50447">
    <property type="entry name" value="Translation proteins"/>
    <property type="match status" value="2"/>
</dbReference>
<dbReference type="PROSITE" id="PS51722">
    <property type="entry name" value="G_TR_2"/>
    <property type="match status" value="1"/>
</dbReference>
<dbReference type="PROSITE" id="PS01176">
    <property type="entry name" value="IF2"/>
    <property type="match status" value="1"/>
</dbReference>